<organism>
    <name type="scientific">Methanosarcina acetivorans (strain ATCC 35395 / DSM 2834 / JCM 12185 / C2A)</name>
    <dbReference type="NCBI Taxonomy" id="188937"/>
    <lineage>
        <taxon>Archaea</taxon>
        <taxon>Methanobacteriati</taxon>
        <taxon>Methanobacteriota</taxon>
        <taxon>Stenosarchaea group</taxon>
        <taxon>Methanomicrobia</taxon>
        <taxon>Methanosarcinales</taxon>
        <taxon>Methanosarcinaceae</taxon>
        <taxon>Methanosarcina</taxon>
    </lineage>
</organism>
<gene>
    <name evidence="1" type="primary">purA2</name>
    <name type="ordered locus">MA_4118</name>
</gene>
<evidence type="ECO:0000255" key="1">
    <source>
        <dbReference type="HAMAP-Rule" id="MF_00011"/>
    </source>
</evidence>
<name>PURA2_METAC</name>
<accession>Q8TIM8</accession>
<keyword id="KW-0963">Cytoplasm</keyword>
<keyword id="KW-0342">GTP-binding</keyword>
<keyword id="KW-0436">Ligase</keyword>
<keyword id="KW-0460">Magnesium</keyword>
<keyword id="KW-0479">Metal-binding</keyword>
<keyword id="KW-0547">Nucleotide-binding</keyword>
<keyword id="KW-0658">Purine biosynthesis</keyword>
<keyword id="KW-1185">Reference proteome</keyword>
<feature type="chain" id="PRO_0000095270" description="Adenylosuccinate synthetase 2">
    <location>
        <begin position="1"/>
        <end position="424"/>
    </location>
</feature>
<feature type="active site" description="Proton acceptor" evidence="1">
    <location>
        <position position="12"/>
    </location>
</feature>
<feature type="active site" description="Proton donor" evidence="1">
    <location>
        <position position="40"/>
    </location>
</feature>
<feature type="binding site" evidence="1">
    <location>
        <begin position="11"/>
        <end position="17"/>
    </location>
    <ligand>
        <name>GTP</name>
        <dbReference type="ChEBI" id="CHEBI:37565"/>
    </ligand>
</feature>
<feature type="binding site" description="in other chain" evidence="1">
    <location>
        <begin position="12"/>
        <end position="15"/>
    </location>
    <ligand>
        <name>IMP</name>
        <dbReference type="ChEBI" id="CHEBI:58053"/>
        <note>ligand shared between dimeric partners</note>
    </ligand>
</feature>
<feature type="binding site" evidence="1">
    <location>
        <position position="12"/>
    </location>
    <ligand>
        <name>Mg(2+)</name>
        <dbReference type="ChEBI" id="CHEBI:18420"/>
    </ligand>
</feature>
<feature type="binding site" description="in other chain" evidence="1">
    <location>
        <begin position="37"/>
        <end position="40"/>
    </location>
    <ligand>
        <name>IMP</name>
        <dbReference type="ChEBI" id="CHEBI:58053"/>
        <note>ligand shared between dimeric partners</note>
    </ligand>
</feature>
<feature type="binding site" evidence="1">
    <location>
        <begin position="39"/>
        <end position="41"/>
    </location>
    <ligand>
        <name>GTP</name>
        <dbReference type="ChEBI" id="CHEBI:37565"/>
    </ligand>
</feature>
<feature type="binding site" evidence="1">
    <location>
        <position position="39"/>
    </location>
    <ligand>
        <name>Mg(2+)</name>
        <dbReference type="ChEBI" id="CHEBI:18420"/>
    </ligand>
</feature>
<feature type="binding site" description="in other chain" evidence="1">
    <location>
        <position position="127"/>
    </location>
    <ligand>
        <name>IMP</name>
        <dbReference type="ChEBI" id="CHEBI:58053"/>
        <note>ligand shared between dimeric partners</note>
    </ligand>
</feature>
<feature type="binding site" evidence="1">
    <location>
        <position position="141"/>
    </location>
    <ligand>
        <name>IMP</name>
        <dbReference type="ChEBI" id="CHEBI:58053"/>
        <note>ligand shared between dimeric partners</note>
    </ligand>
</feature>
<feature type="binding site" description="in other chain" evidence="1">
    <location>
        <position position="223"/>
    </location>
    <ligand>
        <name>IMP</name>
        <dbReference type="ChEBI" id="CHEBI:58053"/>
        <note>ligand shared between dimeric partners</note>
    </ligand>
</feature>
<feature type="binding site" description="in other chain" evidence="1">
    <location>
        <position position="238"/>
    </location>
    <ligand>
        <name>IMP</name>
        <dbReference type="ChEBI" id="CHEBI:58053"/>
        <note>ligand shared between dimeric partners</note>
    </ligand>
</feature>
<feature type="binding site" evidence="1">
    <location>
        <begin position="298"/>
        <end position="304"/>
    </location>
    <ligand>
        <name>substrate</name>
    </ligand>
</feature>
<feature type="binding site" description="in other chain" evidence="1">
    <location>
        <position position="302"/>
    </location>
    <ligand>
        <name>IMP</name>
        <dbReference type="ChEBI" id="CHEBI:58053"/>
        <note>ligand shared between dimeric partners</note>
    </ligand>
</feature>
<feature type="binding site" evidence="1">
    <location>
        <position position="304"/>
    </location>
    <ligand>
        <name>GTP</name>
        <dbReference type="ChEBI" id="CHEBI:37565"/>
    </ligand>
</feature>
<feature type="binding site" evidence="1">
    <location>
        <begin position="330"/>
        <end position="332"/>
    </location>
    <ligand>
        <name>GTP</name>
        <dbReference type="ChEBI" id="CHEBI:37565"/>
    </ligand>
</feature>
<feature type="binding site" evidence="1">
    <location>
        <begin position="412"/>
        <end position="414"/>
    </location>
    <ligand>
        <name>GTP</name>
        <dbReference type="ChEBI" id="CHEBI:37565"/>
    </ligand>
</feature>
<proteinExistence type="inferred from homology"/>
<comment type="function">
    <text evidence="1">Plays an important role in the de novo pathway of purine nucleotide biosynthesis. Catalyzes the first committed step in the biosynthesis of AMP from IMP.</text>
</comment>
<comment type="catalytic activity">
    <reaction evidence="1">
        <text>IMP + L-aspartate + GTP = N(6)-(1,2-dicarboxyethyl)-AMP + GDP + phosphate + 2 H(+)</text>
        <dbReference type="Rhea" id="RHEA:15753"/>
        <dbReference type="ChEBI" id="CHEBI:15378"/>
        <dbReference type="ChEBI" id="CHEBI:29991"/>
        <dbReference type="ChEBI" id="CHEBI:37565"/>
        <dbReference type="ChEBI" id="CHEBI:43474"/>
        <dbReference type="ChEBI" id="CHEBI:57567"/>
        <dbReference type="ChEBI" id="CHEBI:58053"/>
        <dbReference type="ChEBI" id="CHEBI:58189"/>
        <dbReference type="EC" id="6.3.4.4"/>
    </reaction>
</comment>
<comment type="cofactor">
    <cofactor evidence="1">
        <name>Mg(2+)</name>
        <dbReference type="ChEBI" id="CHEBI:18420"/>
    </cofactor>
    <text evidence="1">Binds 1 Mg(2+) ion per subunit.</text>
</comment>
<comment type="pathway">
    <text evidence="1">Purine metabolism; AMP biosynthesis via de novo pathway; AMP from IMP: step 1/2.</text>
</comment>
<comment type="subunit">
    <text evidence="1">Homodimer.</text>
</comment>
<comment type="subcellular location">
    <subcellularLocation>
        <location evidence="1">Cytoplasm</location>
    </subcellularLocation>
</comment>
<comment type="similarity">
    <text evidence="1">Belongs to the adenylosuccinate synthetase family.</text>
</comment>
<dbReference type="EC" id="6.3.4.4" evidence="1"/>
<dbReference type="EMBL" id="AE010299">
    <property type="protein sequence ID" value="AAM07466.1"/>
    <property type="molecule type" value="Genomic_DNA"/>
</dbReference>
<dbReference type="RefSeq" id="WP_011024009.1">
    <property type="nucleotide sequence ID" value="NC_003552.1"/>
</dbReference>
<dbReference type="SMR" id="Q8TIM8"/>
<dbReference type="FunCoup" id="Q8TIM8">
    <property type="interactions" value="290"/>
</dbReference>
<dbReference type="STRING" id="188937.MA_4118"/>
<dbReference type="EnsemblBacteria" id="AAM07466">
    <property type="protein sequence ID" value="AAM07466"/>
    <property type="gene ID" value="MA_4118"/>
</dbReference>
<dbReference type="GeneID" id="1476012"/>
<dbReference type="KEGG" id="mac:MA_4118"/>
<dbReference type="HOGENOM" id="CLU_029848_0_0_2"/>
<dbReference type="InParanoid" id="Q8TIM8"/>
<dbReference type="OrthoDB" id="372247at2157"/>
<dbReference type="PhylomeDB" id="Q8TIM8"/>
<dbReference type="UniPathway" id="UPA00075">
    <property type="reaction ID" value="UER00335"/>
</dbReference>
<dbReference type="Proteomes" id="UP000002487">
    <property type="component" value="Chromosome"/>
</dbReference>
<dbReference type="GO" id="GO:0005737">
    <property type="term" value="C:cytoplasm"/>
    <property type="evidence" value="ECO:0000318"/>
    <property type="project" value="GO_Central"/>
</dbReference>
<dbReference type="GO" id="GO:0004019">
    <property type="term" value="F:adenylosuccinate synthase activity"/>
    <property type="evidence" value="ECO:0000318"/>
    <property type="project" value="GO_Central"/>
</dbReference>
<dbReference type="GO" id="GO:0005525">
    <property type="term" value="F:GTP binding"/>
    <property type="evidence" value="ECO:0007669"/>
    <property type="project" value="UniProtKB-UniRule"/>
</dbReference>
<dbReference type="GO" id="GO:0000287">
    <property type="term" value="F:magnesium ion binding"/>
    <property type="evidence" value="ECO:0007669"/>
    <property type="project" value="UniProtKB-UniRule"/>
</dbReference>
<dbReference type="GO" id="GO:0044208">
    <property type="term" value="P:'de novo' AMP biosynthetic process"/>
    <property type="evidence" value="ECO:0000318"/>
    <property type="project" value="GO_Central"/>
</dbReference>
<dbReference type="GO" id="GO:0046040">
    <property type="term" value="P:IMP metabolic process"/>
    <property type="evidence" value="ECO:0000318"/>
    <property type="project" value="GO_Central"/>
</dbReference>
<dbReference type="CDD" id="cd03108">
    <property type="entry name" value="AdSS"/>
    <property type="match status" value="1"/>
</dbReference>
<dbReference type="FunFam" id="1.10.300.10:FF:000001">
    <property type="entry name" value="Adenylosuccinate synthetase"/>
    <property type="match status" value="1"/>
</dbReference>
<dbReference type="FunFam" id="3.90.170.10:FF:000001">
    <property type="entry name" value="Adenylosuccinate synthetase"/>
    <property type="match status" value="1"/>
</dbReference>
<dbReference type="Gene3D" id="3.40.440.10">
    <property type="entry name" value="Adenylosuccinate Synthetase, subunit A, domain 1"/>
    <property type="match status" value="1"/>
</dbReference>
<dbReference type="Gene3D" id="1.10.300.10">
    <property type="entry name" value="Adenylosuccinate Synthetase, subunit A, domain 2"/>
    <property type="match status" value="1"/>
</dbReference>
<dbReference type="Gene3D" id="3.90.170.10">
    <property type="entry name" value="Adenylosuccinate Synthetase, subunit A, domain 3"/>
    <property type="match status" value="1"/>
</dbReference>
<dbReference type="HAMAP" id="MF_00011">
    <property type="entry name" value="Adenylosucc_synth"/>
    <property type="match status" value="1"/>
</dbReference>
<dbReference type="InterPro" id="IPR018220">
    <property type="entry name" value="Adenylosuccin_syn_GTP-bd"/>
</dbReference>
<dbReference type="InterPro" id="IPR042109">
    <property type="entry name" value="Adenylosuccinate_synth_dom1"/>
</dbReference>
<dbReference type="InterPro" id="IPR042110">
    <property type="entry name" value="Adenylosuccinate_synth_dom2"/>
</dbReference>
<dbReference type="InterPro" id="IPR042111">
    <property type="entry name" value="Adenylosuccinate_synth_dom3"/>
</dbReference>
<dbReference type="InterPro" id="IPR001114">
    <property type="entry name" value="Adenylosuccinate_synthetase"/>
</dbReference>
<dbReference type="InterPro" id="IPR027417">
    <property type="entry name" value="P-loop_NTPase"/>
</dbReference>
<dbReference type="NCBIfam" id="NF002223">
    <property type="entry name" value="PRK01117.1"/>
    <property type="match status" value="1"/>
</dbReference>
<dbReference type="NCBIfam" id="TIGR00184">
    <property type="entry name" value="purA"/>
    <property type="match status" value="1"/>
</dbReference>
<dbReference type="PANTHER" id="PTHR11846">
    <property type="entry name" value="ADENYLOSUCCINATE SYNTHETASE"/>
    <property type="match status" value="1"/>
</dbReference>
<dbReference type="PANTHER" id="PTHR11846:SF0">
    <property type="entry name" value="ADENYLOSUCCINATE SYNTHETASE"/>
    <property type="match status" value="1"/>
</dbReference>
<dbReference type="Pfam" id="PF00709">
    <property type="entry name" value="Adenylsucc_synt"/>
    <property type="match status" value="1"/>
</dbReference>
<dbReference type="SMART" id="SM00788">
    <property type="entry name" value="Adenylsucc_synt"/>
    <property type="match status" value="1"/>
</dbReference>
<dbReference type="SUPFAM" id="SSF52540">
    <property type="entry name" value="P-loop containing nucleoside triphosphate hydrolases"/>
    <property type="match status" value="1"/>
</dbReference>
<dbReference type="PROSITE" id="PS01266">
    <property type="entry name" value="ADENYLOSUCCIN_SYN_1"/>
    <property type="match status" value="1"/>
</dbReference>
<protein>
    <recommendedName>
        <fullName evidence="1">Adenylosuccinate synthetase 2</fullName>
        <shortName evidence="1">AMPSase 2</shortName>
        <shortName evidence="1">AdSS 2</shortName>
        <ecNumber evidence="1">6.3.4.4</ecNumber>
    </recommendedName>
    <alternativeName>
        <fullName evidence="1">IMP--aspartate ligase 2</fullName>
    </alternativeName>
</protein>
<reference key="1">
    <citation type="journal article" date="2002" name="Genome Res.">
        <title>The genome of Methanosarcina acetivorans reveals extensive metabolic and physiological diversity.</title>
        <authorList>
            <person name="Galagan J.E."/>
            <person name="Nusbaum C."/>
            <person name="Roy A."/>
            <person name="Endrizzi M.G."/>
            <person name="Macdonald P."/>
            <person name="FitzHugh W."/>
            <person name="Calvo S."/>
            <person name="Engels R."/>
            <person name="Smirnov S."/>
            <person name="Atnoor D."/>
            <person name="Brown A."/>
            <person name="Allen N."/>
            <person name="Naylor J."/>
            <person name="Stange-Thomann N."/>
            <person name="DeArellano K."/>
            <person name="Johnson R."/>
            <person name="Linton L."/>
            <person name="McEwan P."/>
            <person name="McKernan K."/>
            <person name="Talamas J."/>
            <person name="Tirrell A."/>
            <person name="Ye W."/>
            <person name="Zimmer A."/>
            <person name="Barber R.D."/>
            <person name="Cann I."/>
            <person name="Graham D.E."/>
            <person name="Grahame D.A."/>
            <person name="Guss A.M."/>
            <person name="Hedderich R."/>
            <person name="Ingram-Smith C."/>
            <person name="Kuettner H.C."/>
            <person name="Krzycki J.A."/>
            <person name="Leigh J.A."/>
            <person name="Li W."/>
            <person name="Liu J."/>
            <person name="Mukhopadhyay B."/>
            <person name="Reeve J.N."/>
            <person name="Smith K."/>
            <person name="Springer T.A."/>
            <person name="Umayam L.A."/>
            <person name="White O."/>
            <person name="White R.H."/>
            <person name="de Macario E.C."/>
            <person name="Ferry J.G."/>
            <person name="Jarrell K.F."/>
            <person name="Jing H."/>
            <person name="Macario A.J.L."/>
            <person name="Paulsen I.T."/>
            <person name="Pritchett M."/>
            <person name="Sowers K.R."/>
            <person name="Swanson R.V."/>
            <person name="Zinder S.H."/>
            <person name="Lander E."/>
            <person name="Metcalf W.W."/>
            <person name="Birren B."/>
        </authorList>
    </citation>
    <scope>NUCLEOTIDE SEQUENCE [LARGE SCALE GENOMIC DNA]</scope>
    <source>
        <strain>ATCC 35395 / DSM 2834 / JCM 12185 / C2A</strain>
    </source>
</reference>
<sequence>MFTIITGAQFGDEGKGKIVDLLAKDYDIVARFQGGNNAGHTVRVGDEVYKLHLIPSGILLDARVLIGPGVVLNPEVLAEETAMFEKHGIKVDAEKLGVDAKTSIIMPYHIEMDGLREAARKTKIGTTKRGIGYAYIDKVARDEIRMAELVDKERFLKRLEELAPQKEKEIEAMGGDPKIVRDPFLIQKYLELGEQFASYVTDVSREINQALDEGKHVMAEAAQGTHLDVIHGTQKFVTSSSTIAGSACANLGVGPTRVGNVIAIVKAYITRVGEGPLPTELSGELGEKIQKAGGEFGTTTGRGRRCGWFDLPLLKKAIALNGYTEISLTKLDVLTGLEPLRICVGYKYKGEDLDYPPELTEDLWECSPVYEDLPGWETDLTEVKAYSELPENAQNYIKRLEELMKVPINYISVGPGREQTFKKE</sequence>